<name>RPOC1_RHDSA</name>
<evidence type="ECO:0000255" key="1">
    <source>
        <dbReference type="HAMAP-Rule" id="MF_01323"/>
    </source>
</evidence>
<geneLocation type="chloroplast"/>
<protein>
    <recommendedName>
        <fullName evidence="1">DNA-directed RNA polymerase subunit beta'</fullName>
        <ecNumber evidence="1">2.7.7.6</ecNumber>
    </recommendedName>
    <alternativeName>
        <fullName evidence="1">PEP</fullName>
    </alternativeName>
    <alternativeName>
        <fullName evidence="1">Plastid-encoded RNA polymerase subunit beta'</fullName>
        <shortName evidence="1">RNA polymerase subunit beta'</shortName>
    </alternativeName>
</protein>
<accession>A6MVX3</accession>
<comment type="function">
    <text evidence="1">DNA-dependent RNA polymerase catalyzes the transcription of DNA into RNA using the four ribonucleoside triphosphates as substrates.</text>
</comment>
<comment type="catalytic activity">
    <reaction evidence="1">
        <text>RNA(n) + a ribonucleoside 5'-triphosphate = RNA(n+1) + diphosphate</text>
        <dbReference type="Rhea" id="RHEA:21248"/>
        <dbReference type="Rhea" id="RHEA-COMP:14527"/>
        <dbReference type="Rhea" id="RHEA-COMP:17342"/>
        <dbReference type="ChEBI" id="CHEBI:33019"/>
        <dbReference type="ChEBI" id="CHEBI:61557"/>
        <dbReference type="ChEBI" id="CHEBI:140395"/>
        <dbReference type="EC" id="2.7.7.6"/>
    </reaction>
</comment>
<comment type="cofactor">
    <cofactor evidence="1">
        <name>Mg(2+)</name>
        <dbReference type="ChEBI" id="CHEBI:18420"/>
    </cofactor>
    <text evidence="1">Binds 1 Mg(2+) ion per subunit.</text>
</comment>
<comment type="cofactor">
    <cofactor evidence="1">
        <name>Zn(2+)</name>
        <dbReference type="ChEBI" id="CHEBI:29105"/>
    </cofactor>
    <text evidence="1">Binds 1 Zn(2+) ion per subunit.</text>
</comment>
<comment type="subunit">
    <text evidence="1">In plastids the minimal PEP RNA polymerase catalytic core is composed of four subunits: alpha, beta, beta', and beta''. When a (nuclear-encoded) sigma factor is associated with the core the holoenzyme is formed, which can initiate transcription.</text>
</comment>
<comment type="subcellular location">
    <subcellularLocation>
        <location evidence="1">Plastid</location>
        <location evidence="1">Chloroplast</location>
    </subcellularLocation>
</comment>
<comment type="similarity">
    <text evidence="1">Belongs to the RNA polymerase beta' chain family. RpoC1 subfamily.</text>
</comment>
<keyword id="KW-0150">Chloroplast</keyword>
<keyword id="KW-0240">DNA-directed RNA polymerase</keyword>
<keyword id="KW-0460">Magnesium</keyword>
<keyword id="KW-0479">Metal-binding</keyword>
<keyword id="KW-0548">Nucleotidyltransferase</keyword>
<keyword id="KW-0934">Plastid</keyword>
<keyword id="KW-0804">Transcription</keyword>
<keyword id="KW-0808">Transferase</keyword>
<keyword id="KW-0862">Zinc</keyword>
<feature type="chain" id="PRO_0000353518" description="DNA-directed RNA polymerase subunit beta'">
    <location>
        <begin position="1"/>
        <end position="623"/>
    </location>
</feature>
<feature type="binding site" evidence="1">
    <location>
        <position position="70"/>
    </location>
    <ligand>
        <name>Zn(2+)</name>
        <dbReference type="ChEBI" id="CHEBI:29105"/>
    </ligand>
</feature>
<feature type="binding site" evidence="1">
    <location>
        <position position="72"/>
    </location>
    <ligand>
        <name>Zn(2+)</name>
        <dbReference type="ChEBI" id="CHEBI:29105"/>
    </ligand>
</feature>
<feature type="binding site" evidence="1">
    <location>
        <position position="85"/>
    </location>
    <ligand>
        <name>Zn(2+)</name>
        <dbReference type="ChEBI" id="CHEBI:29105"/>
    </ligand>
</feature>
<feature type="binding site" evidence="1">
    <location>
        <position position="88"/>
    </location>
    <ligand>
        <name>Zn(2+)</name>
        <dbReference type="ChEBI" id="CHEBI:29105"/>
    </ligand>
</feature>
<feature type="binding site" evidence="1">
    <location>
        <position position="466"/>
    </location>
    <ligand>
        <name>Mg(2+)</name>
        <dbReference type="ChEBI" id="CHEBI:18420"/>
    </ligand>
</feature>
<feature type="binding site" evidence="1">
    <location>
        <position position="468"/>
    </location>
    <ligand>
        <name>Mg(2+)</name>
        <dbReference type="ChEBI" id="CHEBI:18420"/>
    </ligand>
</feature>
<feature type="binding site" evidence="1">
    <location>
        <position position="470"/>
    </location>
    <ligand>
        <name>Mg(2+)</name>
        <dbReference type="ChEBI" id="CHEBI:18420"/>
    </ligand>
</feature>
<proteinExistence type="inferred from homology"/>
<organism>
    <name type="scientific">Rhodomonas salina</name>
    <name type="common">Cryptomonas salina</name>
    <dbReference type="NCBI Taxonomy" id="52970"/>
    <lineage>
        <taxon>Eukaryota</taxon>
        <taxon>Cryptophyceae</taxon>
        <taxon>Pyrenomonadales</taxon>
        <taxon>Pyrenomonadaceae</taxon>
        <taxon>Rhodomonas</taxon>
    </lineage>
</organism>
<reference key="1">
    <citation type="journal article" date="2007" name="Mol. Biol. Evol.">
        <title>Plastid genome sequence of the cryptophyte alga Rhodomonas salina CCMP1319: lateral transfer of putative DNA replication machinery and a test of chromist plastid phylogeny.</title>
        <authorList>
            <person name="Khan H."/>
            <person name="Parks N."/>
            <person name="Kozera C."/>
            <person name="Curtis B.A."/>
            <person name="Parsons B.J."/>
            <person name="Bowman S."/>
            <person name="Archibald J.M."/>
        </authorList>
    </citation>
    <scope>NUCLEOTIDE SEQUENCE [LARGE SCALE GENOMIC DNA]</scope>
    <source>
        <strain>CCMP1319 / NEPCC76 / CS-174</strain>
    </source>
</reference>
<dbReference type="EC" id="2.7.7.6" evidence="1"/>
<dbReference type="EMBL" id="EF508371">
    <property type="protein sequence ID" value="ABO70812.1"/>
    <property type="molecule type" value="Genomic_DNA"/>
</dbReference>
<dbReference type="RefSeq" id="YP_001293552.1">
    <property type="nucleotide sequence ID" value="NC_009573.1"/>
</dbReference>
<dbReference type="SMR" id="A6MVX3"/>
<dbReference type="GeneID" id="5228649"/>
<dbReference type="GO" id="GO:0009507">
    <property type="term" value="C:chloroplast"/>
    <property type="evidence" value="ECO:0007669"/>
    <property type="project" value="UniProtKB-SubCell"/>
</dbReference>
<dbReference type="GO" id="GO:0000428">
    <property type="term" value="C:DNA-directed RNA polymerase complex"/>
    <property type="evidence" value="ECO:0007669"/>
    <property type="project" value="UniProtKB-KW"/>
</dbReference>
<dbReference type="GO" id="GO:0005739">
    <property type="term" value="C:mitochondrion"/>
    <property type="evidence" value="ECO:0007669"/>
    <property type="project" value="GOC"/>
</dbReference>
<dbReference type="GO" id="GO:0003677">
    <property type="term" value="F:DNA binding"/>
    <property type="evidence" value="ECO:0007669"/>
    <property type="project" value="UniProtKB-UniRule"/>
</dbReference>
<dbReference type="GO" id="GO:0003899">
    <property type="term" value="F:DNA-directed RNA polymerase activity"/>
    <property type="evidence" value="ECO:0007669"/>
    <property type="project" value="UniProtKB-UniRule"/>
</dbReference>
<dbReference type="GO" id="GO:0000287">
    <property type="term" value="F:magnesium ion binding"/>
    <property type="evidence" value="ECO:0007669"/>
    <property type="project" value="UniProtKB-UniRule"/>
</dbReference>
<dbReference type="GO" id="GO:0008270">
    <property type="term" value="F:zinc ion binding"/>
    <property type="evidence" value="ECO:0007669"/>
    <property type="project" value="UniProtKB-UniRule"/>
</dbReference>
<dbReference type="GO" id="GO:0006351">
    <property type="term" value="P:DNA-templated transcription"/>
    <property type="evidence" value="ECO:0007669"/>
    <property type="project" value="UniProtKB-UniRule"/>
</dbReference>
<dbReference type="Gene3D" id="1.10.40.90">
    <property type="match status" value="1"/>
</dbReference>
<dbReference type="Gene3D" id="2.40.40.20">
    <property type="match status" value="1"/>
</dbReference>
<dbReference type="Gene3D" id="4.10.860.120">
    <property type="entry name" value="RNA polymerase II, clamp domain"/>
    <property type="match status" value="1"/>
</dbReference>
<dbReference type="Gene3D" id="1.10.274.100">
    <property type="entry name" value="RNA polymerase Rpb1, domain 3"/>
    <property type="match status" value="1"/>
</dbReference>
<dbReference type="HAMAP" id="MF_01323">
    <property type="entry name" value="RNApol_bact_RpoC1"/>
    <property type="match status" value="1"/>
</dbReference>
<dbReference type="InterPro" id="IPR012755">
    <property type="entry name" value="DNA-dir_RpoC1_gamma"/>
</dbReference>
<dbReference type="InterPro" id="IPR045867">
    <property type="entry name" value="DNA-dir_RpoC_beta_prime"/>
</dbReference>
<dbReference type="InterPro" id="IPR000722">
    <property type="entry name" value="RNA_pol_asu"/>
</dbReference>
<dbReference type="InterPro" id="IPR006592">
    <property type="entry name" value="RNA_pol_N"/>
</dbReference>
<dbReference type="InterPro" id="IPR007080">
    <property type="entry name" value="RNA_pol_Rpb1_1"/>
</dbReference>
<dbReference type="InterPro" id="IPR007066">
    <property type="entry name" value="RNA_pol_Rpb1_3"/>
</dbReference>
<dbReference type="InterPro" id="IPR042102">
    <property type="entry name" value="RNA_pol_Rpb1_3_sf"/>
</dbReference>
<dbReference type="InterPro" id="IPR044893">
    <property type="entry name" value="RNA_pol_Rpb1_clamp_domain"/>
</dbReference>
<dbReference type="InterPro" id="IPR034678">
    <property type="entry name" value="RNApol_RpoC1"/>
</dbReference>
<dbReference type="NCBIfam" id="NF002729">
    <property type="entry name" value="PRK02625.1"/>
    <property type="match status" value="1"/>
</dbReference>
<dbReference type="NCBIfam" id="TIGR02387">
    <property type="entry name" value="rpoC1_cyan"/>
    <property type="match status" value="1"/>
</dbReference>
<dbReference type="PANTHER" id="PTHR19376">
    <property type="entry name" value="DNA-DIRECTED RNA POLYMERASE"/>
    <property type="match status" value="1"/>
</dbReference>
<dbReference type="PANTHER" id="PTHR19376:SF54">
    <property type="entry name" value="DNA-DIRECTED RNA POLYMERASE SUBUNIT BETA"/>
    <property type="match status" value="1"/>
</dbReference>
<dbReference type="Pfam" id="PF04997">
    <property type="entry name" value="RNA_pol_Rpb1_1"/>
    <property type="match status" value="1"/>
</dbReference>
<dbReference type="Pfam" id="PF00623">
    <property type="entry name" value="RNA_pol_Rpb1_2"/>
    <property type="match status" value="1"/>
</dbReference>
<dbReference type="Pfam" id="PF04983">
    <property type="entry name" value="RNA_pol_Rpb1_3"/>
    <property type="match status" value="1"/>
</dbReference>
<dbReference type="SMART" id="SM00663">
    <property type="entry name" value="RPOLA_N"/>
    <property type="match status" value="1"/>
</dbReference>
<dbReference type="SUPFAM" id="SSF64484">
    <property type="entry name" value="beta and beta-prime subunits of DNA dependent RNA-polymerase"/>
    <property type="match status" value="1"/>
</dbReference>
<sequence length="623" mass="71313">MAKLEQYFDYVKINLASPERIRKWGERTLPNGQIVGEVTKPETINYRTLKPEMDGLFCERIFGPVKDWECHCGKYKRVRYKGIICERCGVEVAESKVRRHRMGHIELAAPVTHVWYLKSLPSYISILLDIPLKDVEQIVYFNSYIVTRPGNCPNLRYKQLLSEDEWIEIEDQLYQEDSNLYGVEVGIGAEAIQKLLKDVDLEVEAESLREDVLSAKGSKRDKAIKRLRVIDNFIATRSDPAWMILTVLPVIPPDLRPMVQLDGGRFATSDLNDLYRRVLNRNNRLIRLQEILAPEIIIRNEKRMLQESVDALIDNGRRGRTVVGANNRPLKSLSDIIEGKQGRFRQNLLGKRVDYSGRSVIVVGPTLQLNQCGLPREMALELFQPFVIHKLIHQGLVNNIKAAKKMIQKNDSVIWSVLEEVIQGHPVLLNRAPTLHRLGIQAFEPILVEGRAIKLHPLVCPAFNADFDGDQMAVHIPLSLEAQAEARLLMLAPYNFLSPATGEPIIMPSQDMVLGCYYLTTHNPSQQKSQAYYFSNLEDALLAYECKKIALHSYVWVRFEGEVEDENLKIRTSILKEKYTLDIFTERIIKTDEEKKVIAQYILTTPGRILLNKTLFDSLTLSN</sequence>
<gene>
    <name evidence="1" type="primary">rpoC1</name>
</gene>